<proteinExistence type="inferred from homology"/>
<protein>
    <recommendedName>
        <fullName evidence="1">Large ribosomal subunit protein bL34</fullName>
    </recommendedName>
    <alternativeName>
        <fullName evidence="2">50S ribosomal protein L34</fullName>
    </alternativeName>
</protein>
<reference key="1">
    <citation type="journal article" date="2008" name="Genome Res.">
        <title>Insights from the complete genome sequence of Mycobacterium marinum on the evolution of Mycobacterium tuberculosis.</title>
        <authorList>
            <person name="Stinear T.P."/>
            <person name="Seemann T."/>
            <person name="Harrison P.F."/>
            <person name="Jenkin G.A."/>
            <person name="Davies J.K."/>
            <person name="Johnson P.D."/>
            <person name="Abdellah Z."/>
            <person name="Arrowsmith C."/>
            <person name="Chillingworth T."/>
            <person name="Churcher C."/>
            <person name="Clarke K."/>
            <person name="Cronin A."/>
            <person name="Davis P."/>
            <person name="Goodhead I."/>
            <person name="Holroyd N."/>
            <person name="Jagels K."/>
            <person name="Lord A."/>
            <person name="Moule S."/>
            <person name="Mungall K."/>
            <person name="Norbertczak H."/>
            <person name="Quail M.A."/>
            <person name="Rabbinowitsch E."/>
            <person name="Walker D."/>
            <person name="White B."/>
            <person name="Whitehead S."/>
            <person name="Small P.L."/>
            <person name="Brosch R."/>
            <person name="Ramakrishnan L."/>
            <person name="Fischbach M.A."/>
            <person name="Parkhill J."/>
            <person name="Cole S.T."/>
        </authorList>
    </citation>
    <scope>NUCLEOTIDE SEQUENCE [LARGE SCALE GENOMIC DNA]</scope>
    <source>
        <strain>ATCC BAA-535 / M</strain>
    </source>
</reference>
<accession>B2HNT9</accession>
<gene>
    <name evidence="1" type="primary">rpmH</name>
    <name type="ordered locus">MMAR_5568</name>
</gene>
<organism>
    <name type="scientific">Mycobacterium marinum (strain ATCC BAA-535 / M)</name>
    <dbReference type="NCBI Taxonomy" id="216594"/>
    <lineage>
        <taxon>Bacteria</taxon>
        <taxon>Bacillati</taxon>
        <taxon>Actinomycetota</taxon>
        <taxon>Actinomycetes</taxon>
        <taxon>Mycobacteriales</taxon>
        <taxon>Mycobacteriaceae</taxon>
        <taxon>Mycobacterium</taxon>
        <taxon>Mycobacterium ulcerans group</taxon>
    </lineage>
</organism>
<comment type="similarity">
    <text evidence="1">Belongs to the bacterial ribosomal protein bL34 family.</text>
</comment>
<dbReference type="EMBL" id="CP000854">
    <property type="protein sequence ID" value="ACC43894.1"/>
    <property type="molecule type" value="Genomic_DNA"/>
</dbReference>
<dbReference type="RefSeq" id="WP_011742530.1">
    <property type="nucleotide sequence ID" value="NC_010612.1"/>
</dbReference>
<dbReference type="SMR" id="B2HNT9"/>
<dbReference type="STRING" id="216594.MMAR_5568"/>
<dbReference type="GeneID" id="34339374"/>
<dbReference type="KEGG" id="mmi:MMAR_5568"/>
<dbReference type="eggNOG" id="COG0230">
    <property type="taxonomic scope" value="Bacteria"/>
</dbReference>
<dbReference type="HOGENOM" id="CLU_129938_2_1_11"/>
<dbReference type="OrthoDB" id="9804832at2"/>
<dbReference type="Proteomes" id="UP000001190">
    <property type="component" value="Chromosome"/>
</dbReference>
<dbReference type="GO" id="GO:1990904">
    <property type="term" value="C:ribonucleoprotein complex"/>
    <property type="evidence" value="ECO:0007669"/>
    <property type="project" value="UniProtKB-KW"/>
</dbReference>
<dbReference type="GO" id="GO:0005840">
    <property type="term" value="C:ribosome"/>
    <property type="evidence" value="ECO:0007669"/>
    <property type="project" value="UniProtKB-KW"/>
</dbReference>
<dbReference type="GO" id="GO:0003735">
    <property type="term" value="F:structural constituent of ribosome"/>
    <property type="evidence" value="ECO:0007669"/>
    <property type="project" value="InterPro"/>
</dbReference>
<dbReference type="GO" id="GO:0006412">
    <property type="term" value="P:translation"/>
    <property type="evidence" value="ECO:0007669"/>
    <property type="project" value="UniProtKB-UniRule"/>
</dbReference>
<dbReference type="Gene3D" id="1.10.287.3980">
    <property type="match status" value="1"/>
</dbReference>
<dbReference type="HAMAP" id="MF_00391">
    <property type="entry name" value="Ribosomal_bL34"/>
    <property type="match status" value="1"/>
</dbReference>
<dbReference type="InterPro" id="IPR000271">
    <property type="entry name" value="Ribosomal_bL34"/>
</dbReference>
<dbReference type="InterPro" id="IPR020939">
    <property type="entry name" value="Ribosomal_bL34_CS"/>
</dbReference>
<dbReference type="NCBIfam" id="TIGR01030">
    <property type="entry name" value="rpmH_bact"/>
    <property type="match status" value="1"/>
</dbReference>
<dbReference type="Pfam" id="PF00468">
    <property type="entry name" value="Ribosomal_L34"/>
    <property type="match status" value="1"/>
</dbReference>
<dbReference type="PROSITE" id="PS00784">
    <property type="entry name" value="RIBOSOMAL_L34"/>
    <property type="match status" value="1"/>
</dbReference>
<keyword id="KW-1185">Reference proteome</keyword>
<keyword id="KW-0687">Ribonucleoprotein</keyword>
<keyword id="KW-0689">Ribosomal protein</keyword>
<evidence type="ECO:0000255" key="1">
    <source>
        <dbReference type="HAMAP-Rule" id="MF_00391"/>
    </source>
</evidence>
<evidence type="ECO:0000305" key="2"/>
<feature type="chain" id="PRO_1000196072" description="Large ribosomal subunit protein bL34">
    <location>
        <begin position="1"/>
        <end position="47"/>
    </location>
</feature>
<sequence length="47" mass="5547">MAKGKRTFQPNNRRRARVHGFRLRMRTRAGRAIVTGRRRKGRRALTA</sequence>
<name>RL34_MYCMM</name>